<comment type="function">
    <text evidence="1">Key enzyme in the regulation of glycerol uptake and metabolism. Catalyzes the phosphorylation of glycerol to yield sn-glycerol 3-phosphate.</text>
</comment>
<comment type="catalytic activity">
    <reaction evidence="1">
        <text>glycerol + ATP = sn-glycerol 3-phosphate + ADP + H(+)</text>
        <dbReference type="Rhea" id="RHEA:21644"/>
        <dbReference type="ChEBI" id="CHEBI:15378"/>
        <dbReference type="ChEBI" id="CHEBI:17754"/>
        <dbReference type="ChEBI" id="CHEBI:30616"/>
        <dbReference type="ChEBI" id="CHEBI:57597"/>
        <dbReference type="ChEBI" id="CHEBI:456216"/>
        <dbReference type="EC" id="2.7.1.30"/>
    </reaction>
</comment>
<comment type="activity regulation">
    <text evidence="1">Activated by phosphorylation and inhibited by fructose 1,6-bisphosphate (FBP).</text>
</comment>
<comment type="pathway">
    <text evidence="1">Polyol metabolism; glycerol degradation via glycerol kinase pathway; sn-glycerol 3-phosphate from glycerol: step 1/1.</text>
</comment>
<comment type="subunit">
    <text evidence="1">Homotetramer and homodimer (in equilibrium).</text>
</comment>
<comment type="PTM">
    <text evidence="1">The phosphoenolpyruvate-dependent sugar phosphotransferase system (PTS), including enzyme I, and histidine-containing protein (HPr) are required for the phosphorylation, which leads to the activation of the enzyme.</text>
</comment>
<comment type="similarity">
    <text evidence="1">Belongs to the FGGY kinase family.</text>
</comment>
<name>GLPK_STRZT</name>
<keyword id="KW-0067">ATP-binding</keyword>
<keyword id="KW-0319">Glycerol metabolism</keyword>
<keyword id="KW-0418">Kinase</keyword>
<keyword id="KW-0547">Nucleotide-binding</keyword>
<keyword id="KW-0597">Phosphoprotein</keyword>
<keyword id="KW-0808">Transferase</keyword>
<sequence length="502" mass="55850">MSQEKYIMAIDQGTTSSRAIIFNKKGEKVSSSQKEFTQIFPQAGWVEHNANEIWNSVQSVIAGAFIESGVKPNQIEAIGITNQRETTVVWDKKTGLPIYNAIVWQSRQTAPLAEQLKSQGYVEKFHEKTGLIIDAYFSATKVRWILDHVEGAQERAEKGELLFGTIDTWLVWKLTDGAAHVTDYSNAARTMLYNIKELKWDDEILEILNIPKAILPEVRSNSEIYGKTAPFHFYGGEVPISGMAGDQQAALFGQLAFEPGMVKNTYGTGSFIIMNTGEEMQLSENNLLTTIGYGINGKVYYALEGSIFIAGSAIQWLRDGLRMVENSPESEKYARDSHNNDEVYVVPAFTGLGAPYWNQNARGSVFGLTRGTSKEDFIKATLQSIAYQVRDIIDTMQVDTQTAIQVLKVDGGAAMNNFLMQFQADILGIDIARAKNLETTALGAAFLAGLSVGYWKDLDELKLLNETGELFEPSMNESRKEQLYKGWKKAVKATQVFAEVDD</sequence>
<organism>
    <name type="scientific">Streptococcus pneumoniae (strain Taiwan19F-14)</name>
    <dbReference type="NCBI Taxonomy" id="487213"/>
    <lineage>
        <taxon>Bacteria</taxon>
        <taxon>Bacillati</taxon>
        <taxon>Bacillota</taxon>
        <taxon>Bacilli</taxon>
        <taxon>Lactobacillales</taxon>
        <taxon>Streptococcaceae</taxon>
        <taxon>Streptococcus</taxon>
    </lineage>
</organism>
<gene>
    <name evidence="1" type="primary">glpK</name>
    <name type="ordered locus">SPT_2201</name>
</gene>
<evidence type="ECO:0000255" key="1">
    <source>
        <dbReference type="HAMAP-Rule" id="MF_00186"/>
    </source>
</evidence>
<accession>C1CUA3</accession>
<dbReference type="EC" id="2.7.1.30" evidence="1"/>
<dbReference type="EMBL" id="CP000921">
    <property type="protein sequence ID" value="ACO23267.1"/>
    <property type="molecule type" value="Genomic_DNA"/>
</dbReference>
<dbReference type="RefSeq" id="WP_000076776.1">
    <property type="nucleotide sequence ID" value="NC_012469.1"/>
</dbReference>
<dbReference type="SMR" id="C1CUA3"/>
<dbReference type="KEGG" id="snt:SPT_2201"/>
<dbReference type="HOGENOM" id="CLU_009281_2_3_9"/>
<dbReference type="UniPathway" id="UPA00618">
    <property type="reaction ID" value="UER00672"/>
</dbReference>
<dbReference type="GO" id="GO:0005829">
    <property type="term" value="C:cytosol"/>
    <property type="evidence" value="ECO:0007669"/>
    <property type="project" value="TreeGrafter"/>
</dbReference>
<dbReference type="GO" id="GO:0005524">
    <property type="term" value="F:ATP binding"/>
    <property type="evidence" value="ECO:0007669"/>
    <property type="project" value="UniProtKB-UniRule"/>
</dbReference>
<dbReference type="GO" id="GO:0004370">
    <property type="term" value="F:glycerol kinase activity"/>
    <property type="evidence" value="ECO:0000250"/>
    <property type="project" value="UniProtKB"/>
</dbReference>
<dbReference type="GO" id="GO:0019563">
    <property type="term" value="P:glycerol catabolic process"/>
    <property type="evidence" value="ECO:0007669"/>
    <property type="project" value="UniProtKB-UniRule"/>
</dbReference>
<dbReference type="GO" id="GO:0006071">
    <property type="term" value="P:glycerol metabolic process"/>
    <property type="evidence" value="ECO:0000250"/>
    <property type="project" value="UniProtKB"/>
</dbReference>
<dbReference type="GO" id="GO:0006072">
    <property type="term" value="P:glycerol-3-phosphate metabolic process"/>
    <property type="evidence" value="ECO:0007669"/>
    <property type="project" value="InterPro"/>
</dbReference>
<dbReference type="CDD" id="cd07786">
    <property type="entry name" value="FGGY_EcGK_like"/>
    <property type="match status" value="1"/>
</dbReference>
<dbReference type="FunFam" id="3.30.420.40:FF:000007">
    <property type="entry name" value="Glycerol kinase"/>
    <property type="match status" value="1"/>
</dbReference>
<dbReference type="FunFam" id="3.30.420.40:FF:000008">
    <property type="entry name" value="Glycerol kinase"/>
    <property type="match status" value="1"/>
</dbReference>
<dbReference type="Gene3D" id="3.30.420.40">
    <property type="match status" value="2"/>
</dbReference>
<dbReference type="HAMAP" id="MF_00186">
    <property type="entry name" value="Glycerol_kin"/>
    <property type="match status" value="1"/>
</dbReference>
<dbReference type="InterPro" id="IPR043129">
    <property type="entry name" value="ATPase_NBD"/>
</dbReference>
<dbReference type="InterPro" id="IPR000577">
    <property type="entry name" value="Carb_kinase_FGGY"/>
</dbReference>
<dbReference type="InterPro" id="IPR018483">
    <property type="entry name" value="Carb_kinase_FGGY_CS"/>
</dbReference>
<dbReference type="InterPro" id="IPR018485">
    <property type="entry name" value="FGGY_C"/>
</dbReference>
<dbReference type="InterPro" id="IPR018484">
    <property type="entry name" value="FGGY_N"/>
</dbReference>
<dbReference type="InterPro" id="IPR005999">
    <property type="entry name" value="Glycerol_kin"/>
</dbReference>
<dbReference type="NCBIfam" id="TIGR01311">
    <property type="entry name" value="glycerol_kin"/>
    <property type="match status" value="1"/>
</dbReference>
<dbReference type="NCBIfam" id="NF000756">
    <property type="entry name" value="PRK00047.1"/>
    <property type="match status" value="1"/>
</dbReference>
<dbReference type="PANTHER" id="PTHR10196:SF69">
    <property type="entry name" value="GLYCEROL KINASE"/>
    <property type="match status" value="1"/>
</dbReference>
<dbReference type="PANTHER" id="PTHR10196">
    <property type="entry name" value="SUGAR KINASE"/>
    <property type="match status" value="1"/>
</dbReference>
<dbReference type="Pfam" id="PF02782">
    <property type="entry name" value="FGGY_C"/>
    <property type="match status" value="1"/>
</dbReference>
<dbReference type="Pfam" id="PF00370">
    <property type="entry name" value="FGGY_N"/>
    <property type="match status" value="1"/>
</dbReference>
<dbReference type="PIRSF" id="PIRSF000538">
    <property type="entry name" value="GlpK"/>
    <property type="match status" value="1"/>
</dbReference>
<dbReference type="SUPFAM" id="SSF53067">
    <property type="entry name" value="Actin-like ATPase domain"/>
    <property type="match status" value="2"/>
</dbReference>
<dbReference type="PROSITE" id="PS00933">
    <property type="entry name" value="FGGY_KINASES_1"/>
    <property type="match status" value="1"/>
</dbReference>
<dbReference type="PROSITE" id="PS00445">
    <property type="entry name" value="FGGY_KINASES_2"/>
    <property type="match status" value="1"/>
</dbReference>
<reference key="1">
    <citation type="journal article" date="2010" name="Genome Biol.">
        <title>Structure and dynamics of the pan-genome of Streptococcus pneumoniae and closely related species.</title>
        <authorList>
            <person name="Donati C."/>
            <person name="Hiller N.L."/>
            <person name="Tettelin H."/>
            <person name="Muzzi A."/>
            <person name="Croucher N.J."/>
            <person name="Angiuoli S.V."/>
            <person name="Oggioni M."/>
            <person name="Dunning Hotopp J.C."/>
            <person name="Hu F.Z."/>
            <person name="Riley D.R."/>
            <person name="Covacci A."/>
            <person name="Mitchell T.J."/>
            <person name="Bentley S.D."/>
            <person name="Kilian M."/>
            <person name="Ehrlich G.D."/>
            <person name="Rappuoli R."/>
            <person name="Moxon E.R."/>
            <person name="Masignani V."/>
        </authorList>
    </citation>
    <scope>NUCLEOTIDE SEQUENCE [LARGE SCALE GENOMIC DNA]</scope>
    <source>
        <strain>Taiwan19F-14</strain>
    </source>
</reference>
<protein>
    <recommendedName>
        <fullName evidence="1">Glycerol kinase</fullName>
        <ecNumber evidence="1">2.7.1.30</ecNumber>
    </recommendedName>
    <alternativeName>
        <fullName evidence="1">ATP:glycerol 3-phosphotransferase</fullName>
    </alternativeName>
    <alternativeName>
        <fullName evidence="1">Glycerokinase</fullName>
        <shortName evidence="1">GK</shortName>
    </alternativeName>
</protein>
<proteinExistence type="inferred from homology"/>
<feature type="chain" id="PRO_1000124210" description="Glycerol kinase">
    <location>
        <begin position="1"/>
        <end position="502"/>
    </location>
</feature>
<feature type="binding site" evidence="1">
    <location>
        <position position="14"/>
    </location>
    <ligand>
        <name>ADP</name>
        <dbReference type="ChEBI" id="CHEBI:456216"/>
    </ligand>
</feature>
<feature type="binding site" evidence="1">
    <location>
        <position position="14"/>
    </location>
    <ligand>
        <name>ATP</name>
        <dbReference type="ChEBI" id="CHEBI:30616"/>
    </ligand>
</feature>
<feature type="binding site" evidence="1">
    <location>
        <position position="14"/>
    </location>
    <ligand>
        <name>sn-glycerol 3-phosphate</name>
        <dbReference type="ChEBI" id="CHEBI:57597"/>
    </ligand>
</feature>
<feature type="binding site" evidence="1">
    <location>
        <position position="15"/>
    </location>
    <ligand>
        <name>ATP</name>
        <dbReference type="ChEBI" id="CHEBI:30616"/>
    </ligand>
</feature>
<feature type="binding site" evidence="1">
    <location>
        <position position="16"/>
    </location>
    <ligand>
        <name>ATP</name>
        <dbReference type="ChEBI" id="CHEBI:30616"/>
    </ligand>
</feature>
<feature type="binding site" evidence="1">
    <location>
        <position position="18"/>
    </location>
    <ligand>
        <name>ADP</name>
        <dbReference type="ChEBI" id="CHEBI:456216"/>
    </ligand>
</feature>
<feature type="binding site" evidence="1">
    <location>
        <position position="84"/>
    </location>
    <ligand>
        <name>glycerol</name>
        <dbReference type="ChEBI" id="CHEBI:17754"/>
    </ligand>
</feature>
<feature type="binding site" evidence="1">
    <location>
        <position position="84"/>
    </location>
    <ligand>
        <name>sn-glycerol 3-phosphate</name>
        <dbReference type="ChEBI" id="CHEBI:57597"/>
    </ligand>
</feature>
<feature type="binding site" evidence="1">
    <location>
        <position position="85"/>
    </location>
    <ligand>
        <name>glycerol</name>
        <dbReference type="ChEBI" id="CHEBI:17754"/>
    </ligand>
</feature>
<feature type="binding site" evidence="1">
    <location>
        <position position="85"/>
    </location>
    <ligand>
        <name>sn-glycerol 3-phosphate</name>
        <dbReference type="ChEBI" id="CHEBI:57597"/>
    </ligand>
</feature>
<feature type="binding site" evidence="1">
    <location>
        <position position="136"/>
    </location>
    <ligand>
        <name>glycerol</name>
        <dbReference type="ChEBI" id="CHEBI:17754"/>
    </ligand>
</feature>
<feature type="binding site" evidence="1">
    <location>
        <position position="136"/>
    </location>
    <ligand>
        <name>sn-glycerol 3-phosphate</name>
        <dbReference type="ChEBI" id="CHEBI:57597"/>
    </ligand>
</feature>
<feature type="binding site" evidence="1">
    <location>
        <position position="246"/>
    </location>
    <ligand>
        <name>glycerol</name>
        <dbReference type="ChEBI" id="CHEBI:17754"/>
    </ligand>
</feature>
<feature type="binding site" evidence="1">
    <location>
        <position position="246"/>
    </location>
    <ligand>
        <name>sn-glycerol 3-phosphate</name>
        <dbReference type="ChEBI" id="CHEBI:57597"/>
    </ligand>
</feature>
<feature type="binding site" evidence="1">
    <location>
        <position position="247"/>
    </location>
    <ligand>
        <name>glycerol</name>
        <dbReference type="ChEBI" id="CHEBI:17754"/>
    </ligand>
</feature>
<feature type="binding site" evidence="1">
    <location>
        <position position="268"/>
    </location>
    <ligand>
        <name>ADP</name>
        <dbReference type="ChEBI" id="CHEBI:456216"/>
    </ligand>
</feature>
<feature type="binding site" evidence="1">
    <location>
        <position position="268"/>
    </location>
    <ligand>
        <name>ATP</name>
        <dbReference type="ChEBI" id="CHEBI:30616"/>
    </ligand>
</feature>
<feature type="binding site" evidence="1">
    <location>
        <position position="311"/>
    </location>
    <ligand>
        <name>ADP</name>
        <dbReference type="ChEBI" id="CHEBI:456216"/>
    </ligand>
</feature>
<feature type="binding site" evidence="1">
    <location>
        <position position="311"/>
    </location>
    <ligand>
        <name>ATP</name>
        <dbReference type="ChEBI" id="CHEBI:30616"/>
    </ligand>
</feature>
<feature type="binding site" evidence="1">
    <location>
        <position position="315"/>
    </location>
    <ligand>
        <name>ATP</name>
        <dbReference type="ChEBI" id="CHEBI:30616"/>
    </ligand>
</feature>
<feature type="binding site" evidence="1">
    <location>
        <position position="412"/>
    </location>
    <ligand>
        <name>ADP</name>
        <dbReference type="ChEBI" id="CHEBI:456216"/>
    </ligand>
</feature>
<feature type="binding site" evidence="1">
    <location>
        <position position="412"/>
    </location>
    <ligand>
        <name>ATP</name>
        <dbReference type="ChEBI" id="CHEBI:30616"/>
    </ligand>
</feature>
<feature type="binding site" evidence="1">
    <location>
        <position position="416"/>
    </location>
    <ligand>
        <name>ADP</name>
        <dbReference type="ChEBI" id="CHEBI:456216"/>
    </ligand>
</feature>
<feature type="modified residue" description="Phosphohistidine; by HPr" evidence="1">
    <location>
        <position position="232"/>
    </location>
</feature>